<feature type="chain" id="PRO_0000051357" description="WD repeat-containing protein WRAP73">
    <location>
        <begin position="1"/>
        <end position="462"/>
    </location>
</feature>
<feature type="repeat" description="WD 1">
    <location>
        <begin position="46"/>
        <end position="86"/>
    </location>
</feature>
<feature type="repeat" description="WD 2">
    <location>
        <begin position="89"/>
        <end position="129"/>
    </location>
</feature>
<feature type="repeat" description="WD 3">
    <location>
        <begin position="176"/>
        <end position="210"/>
    </location>
</feature>
<feature type="repeat" description="WD 4">
    <location>
        <begin position="221"/>
        <end position="260"/>
    </location>
</feature>
<feature type="repeat" description="WD 5">
    <location>
        <begin position="328"/>
        <end position="369"/>
    </location>
</feature>
<feature type="repeat" description="WD 6">
    <location>
        <begin position="371"/>
        <end position="410"/>
    </location>
</feature>
<feature type="modified residue" description="Phosphoserine" evidence="1">
    <location>
        <position position="281"/>
    </location>
</feature>
<feature type="sequence conflict" description="In Ref. 1; BAA92311." evidence="3" ref="1">
    <original>P</original>
    <variation>A</variation>
    <location>
        <position position="417"/>
    </location>
</feature>
<name>WRP73_MOUSE</name>
<dbReference type="EMBL" id="AB034911">
    <property type="protein sequence ID" value="BAA92311.1"/>
    <property type="molecule type" value="mRNA"/>
</dbReference>
<dbReference type="EMBL" id="AK051688">
    <property type="protein sequence ID" value="BAC34722.1"/>
    <property type="molecule type" value="mRNA"/>
</dbReference>
<dbReference type="EMBL" id="AK156969">
    <property type="protein sequence ID" value="BAE33920.1"/>
    <property type="molecule type" value="mRNA"/>
</dbReference>
<dbReference type="EMBL" id="AK160331">
    <property type="protein sequence ID" value="BAE35741.1"/>
    <property type="molecule type" value="mRNA"/>
</dbReference>
<dbReference type="EMBL" id="AL806525">
    <property type="status" value="NOT_ANNOTATED_CDS"/>
    <property type="molecule type" value="Genomic_DNA"/>
</dbReference>
<dbReference type="EMBL" id="CH466594">
    <property type="protein sequence ID" value="EDL14958.1"/>
    <property type="molecule type" value="Genomic_DNA"/>
</dbReference>
<dbReference type="CCDS" id="CCDS19010.1"/>
<dbReference type="RefSeq" id="NP_067474.2">
    <property type="nucleotide sequence ID" value="NM_021499.2"/>
</dbReference>
<dbReference type="SMR" id="Q9JM98"/>
<dbReference type="FunCoup" id="Q9JM98">
    <property type="interactions" value="869"/>
</dbReference>
<dbReference type="IntAct" id="Q9JM98">
    <property type="interactions" value="2"/>
</dbReference>
<dbReference type="STRING" id="10090.ENSMUSP00000030895"/>
<dbReference type="PhosphoSitePlus" id="Q9JM98"/>
<dbReference type="PaxDb" id="10090-ENSMUSP00000030895"/>
<dbReference type="ProteomicsDB" id="297565"/>
<dbReference type="Antibodypedia" id="26895">
    <property type="antibodies" value="47 antibodies from 15 providers"/>
</dbReference>
<dbReference type="DNASU" id="59002"/>
<dbReference type="Ensembl" id="ENSMUST00000030895.12">
    <property type="protein sequence ID" value="ENSMUSP00000030895.6"/>
    <property type="gene ID" value="ENSMUSG00000029029.15"/>
</dbReference>
<dbReference type="GeneID" id="59002"/>
<dbReference type="KEGG" id="mmu:59002"/>
<dbReference type="UCSC" id="uc008wbi.1">
    <property type="organism name" value="mouse"/>
</dbReference>
<dbReference type="AGR" id="MGI:1891749"/>
<dbReference type="CTD" id="49856"/>
<dbReference type="MGI" id="MGI:1891749">
    <property type="gene designation" value="Wrap73"/>
</dbReference>
<dbReference type="VEuPathDB" id="HostDB:ENSMUSG00000029029"/>
<dbReference type="eggNOG" id="KOG4497">
    <property type="taxonomic scope" value="Eukaryota"/>
</dbReference>
<dbReference type="GeneTree" id="ENSGT00390000003623"/>
<dbReference type="HOGENOM" id="CLU_024072_3_1_1"/>
<dbReference type="InParanoid" id="Q9JM98"/>
<dbReference type="OMA" id="CWHLNGD"/>
<dbReference type="OrthoDB" id="308690at2759"/>
<dbReference type="PhylomeDB" id="Q9JM98"/>
<dbReference type="TreeFam" id="TF329103"/>
<dbReference type="BioGRID-ORCS" id="59002">
    <property type="hits" value="5 hits in 78 CRISPR screens"/>
</dbReference>
<dbReference type="PRO" id="PR:Q9JM98"/>
<dbReference type="Proteomes" id="UP000000589">
    <property type="component" value="Chromosome 4"/>
</dbReference>
<dbReference type="RNAct" id="Q9JM98">
    <property type="molecule type" value="protein"/>
</dbReference>
<dbReference type="Bgee" id="ENSMUSG00000029029">
    <property type="expression patterns" value="Expressed in condyle and 253 other cell types or tissues"/>
</dbReference>
<dbReference type="ExpressionAtlas" id="Q9JM98">
    <property type="expression patterns" value="baseline and differential"/>
</dbReference>
<dbReference type="GO" id="GO:0005813">
    <property type="term" value="C:centrosome"/>
    <property type="evidence" value="ECO:0007669"/>
    <property type="project" value="UniProtKB-SubCell"/>
</dbReference>
<dbReference type="GO" id="GO:0036064">
    <property type="term" value="C:ciliary basal body"/>
    <property type="evidence" value="ECO:0000250"/>
    <property type="project" value="UniProtKB"/>
</dbReference>
<dbReference type="GO" id="GO:0005737">
    <property type="term" value="C:cytoplasm"/>
    <property type="evidence" value="ECO:0007669"/>
    <property type="project" value="UniProtKB-SubCell"/>
</dbReference>
<dbReference type="GO" id="GO:0030030">
    <property type="term" value="P:cell projection organization"/>
    <property type="evidence" value="ECO:0007669"/>
    <property type="project" value="UniProtKB-KW"/>
</dbReference>
<dbReference type="GO" id="GO:0090307">
    <property type="term" value="P:mitotic spindle assembly"/>
    <property type="evidence" value="ECO:0007669"/>
    <property type="project" value="Ensembl"/>
</dbReference>
<dbReference type="GO" id="GO:1902857">
    <property type="term" value="P:positive regulation of non-motile cilium assembly"/>
    <property type="evidence" value="ECO:0000250"/>
    <property type="project" value="UniProtKB"/>
</dbReference>
<dbReference type="FunFam" id="2.130.10.10:FF:000384">
    <property type="entry name" value="WD repeat containing, antisense to TP73"/>
    <property type="match status" value="1"/>
</dbReference>
<dbReference type="FunFam" id="2.130.10.10:FF:000671">
    <property type="entry name" value="WD repeat containing, antisense to TP73"/>
    <property type="match status" value="1"/>
</dbReference>
<dbReference type="FunFam" id="2.130.10.10:FF:000650">
    <property type="entry name" value="WD repeat-containing protein WRAP73"/>
    <property type="match status" value="1"/>
</dbReference>
<dbReference type="Gene3D" id="2.130.10.10">
    <property type="entry name" value="YVTN repeat-like/Quinoprotein amine dehydrogenase"/>
    <property type="match status" value="3"/>
</dbReference>
<dbReference type="InterPro" id="IPR052778">
    <property type="entry name" value="Centrosome-WD_assoc"/>
</dbReference>
<dbReference type="InterPro" id="IPR011044">
    <property type="entry name" value="Quino_amine_DH_bsu"/>
</dbReference>
<dbReference type="InterPro" id="IPR015943">
    <property type="entry name" value="WD40/YVTN_repeat-like_dom_sf"/>
</dbReference>
<dbReference type="InterPro" id="IPR001680">
    <property type="entry name" value="WD40_rpt"/>
</dbReference>
<dbReference type="PANTHER" id="PTHR16220">
    <property type="entry name" value="WD REPEAT PROTEIN 8-RELATED"/>
    <property type="match status" value="1"/>
</dbReference>
<dbReference type="PANTHER" id="PTHR16220:SF0">
    <property type="entry name" value="WD REPEAT-CONTAINING PROTEIN WRAP73"/>
    <property type="match status" value="1"/>
</dbReference>
<dbReference type="Pfam" id="PF00400">
    <property type="entry name" value="WD40"/>
    <property type="match status" value="1"/>
</dbReference>
<dbReference type="SMART" id="SM00320">
    <property type="entry name" value="WD40"/>
    <property type="match status" value="4"/>
</dbReference>
<dbReference type="SUPFAM" id="SSF50969">
    <property type="entry name" value="YVTN repeat-like/Quinoprotein amine dehydrogenase"/>
    <property type="match status" value="1"/>
</dbReference>
<accession>Q9JM98</accession>
<accession>Q8BQ21</accession>
<reference key="1">
    <citation type="journal article" date="2001" name="Genomics">
        <title>Isolation, characterization, and mapping of the mouse and human WDR8 genes, members of a novel WD-repeat gene family.</title>
        <authorList>
            <person name="Koshizuka Y."/>
            <person name="Ikegawa S."/>
            <person name="Sano M."/>
            <person name="Nakamura K."/>
            <person name="Nakamura Y."/>
        </authorList>
    </citation>
    <scope>NUCLEOTIDE SEQUENCE [MRNA]</scope>
</reference>
<reference key="2">
    <citation type="journal article" date="2005" name="Science">
        <title>The transcriptional landscape of the mammalian genome.</title>
        <authorList>
            <person name="Carninci P."/>
            <person name="Kasukawa T."/>
            <person name="Katayama S."/>
            <person name="Gough J."/>
            <person name="Frith M.C."/>
            <person name="Maeda N."/>
            <person name="Oyama R."/>
            <person name="Ravasi T."/>
            <person name="Lenhard B."/>
            <person name="Wells C."/>
            <person name="Kodzius R."/>
            <person name="Shimokawa K."/>
            <person name="Bajic V.B."/>
            <person name="Brenner S.E."/>
            <person name="Batalov S."/>
            <person name="Forrest A.R."/>
            <person name="Zavolan M."/>
            <person name="Davis M.J."/>
            <person name="Wilming L.G."/>
            <person name="Aidinis V."/>
            <person name="Allen J.E."/>
            <person name="Ambesi-Impiombato A."/>
            <person name="Apweiler R."/>
            <person name="Aturaliya R.N."/>
            <person name="Bailey T.L."/>
            <person name="Bansal M."/>
            <person name="Baxter L."/>
            <person name="Beisel K.W."/>
            <person name="Bersano T."/>
            <person name="Bono H."/>
            <person name="Chalk A.M."/>
            <person name="Chiu K.P."/>
            <person name="Choudhary V."/>
            <person name="Christoffels A."/>
            <person name="Clutterbuck D.R."/>
            <person name="Crowe M.L."/>
            <person name="Dalla E."/>
            <person name="Dalrymple B.P."/>
            <person name="de Bono B."/>
            <person name="Della Gatta G."/>
            <person name="di Bernardo D."/>
            <person name="Down T."/>
            <person name="Engstrom P."/>
            <person name="Fagiolini M."/>
            <person name="Faulkner G."/>
            <person name="Fletcher C.F."/>
            <person name="Fukushima T."/>
            <person name="Furuno M."/>
            <person name="Futaki S."/>
            <person name="Gariboldi M."/>
            <person name="Georgii-Hemming P."/>
            <person name="Gingeras T.R."/>
            <person name="Gojobori T."/>
            <person name="Green R.E."/>
            <person name="Gustincich S."/>
            <person name="Harbers M."/>
            <person name="Hayashi Y."/>
            <person name="Hensch T.K."/>
            <person name="Hirokawa N."/>
            <person name="Hill D."/>
            <person name="Huminiecki L."/>
            <person name="Iacono M."/>
            <person name="Ikeo K."/>
            <person name="Iwama A."/>
            <person name="Ishikawa T."/>
            <person name="Jakt M."/>
            <person name="Kanapin A."/>
            <person name="Katoh M."/>
            <person name="Kawasawa Y."/>
            <person name="Kelso J."/>
            <person name="Kitamura H."/>
            <person name="Kitano H."/>
            <person name="Kollias G."/>
            <person name="Krishnan S.P."/>
            <person name="Kruger A."/>
            <person name="Kummerfeld S.K."/>
            <person name="Kurochkin I.V."/>
            <person name="Lareau L.F."/>
            <person name="Lazarevic D."/>
            <person name="Lipovich L."/>
            <person name="Liu J."/>
            <person name="Liuni S."/>
            <person name="McWilliam S."/>
            <person name="Madan Babu M."/>
            <person name="Madera M."/>
            <person name="Marchionni L."/>
            <person name="Matsuda H."/>
            <person name="Matsuzawa S."/>
            <person name="Miki H."/>
            <person name="Mignone F."/>
            <person name="Miyake S."/>
            <person name="Morris K."/>
            <person name="Mottagui-Tabar S."/>
            <person name="Mulder N."/>
            <person name="Nakano N."/>
            <person name="Nakauchi H."/>
            <person name="Ng P."/>
            <person name="Nilsson R."/>
            <person name="Nishiguchi S."/>
            <person name="Nishikawa S."/>
            <person name="Nori F."/>
            <person name="Ohara O."/>
            <person name="Okazaki Y."/>
            <person name="Orlando V."/>
            <person name="Pang K.C."/>
            <person name="Pavan W.J."/>
            <person name="Pavesi G."/>
            <person name="Pesole G."/>
            <person name="Petrovsky N."/>
            <person name="Piazza S."/>
            <person name="Reed J."/>
            <person name="Reid J.F."/>
            <person name="Ring B.Z."/>
            <person name="Ringwald M."/>
            <person name="Rost B."/>
            <person name="Ruan Y."/>
            <person name="Salzberg S.L."/>
            <person name="Sandelin A."/>
            <person name="Schneider C."/>
            <person name="Schoenbach C."/>
            <person name="Sekiguchi K."/>
            <person name="Semple C.A."/>
            <person name="Seno S."/>
            <person name="Sessa L."/>
            <person name="Sheng Y."/>
            <person name="Shibata Y."/>
            <person name="Shimada H."/>
            <person name="Shimada K."/>
            <person name="Silva D."/>
            <person name="Sinclair B."/>
            <person name="Sperling S."/>
            <person name="Stupka E."/>
            <person name="Sugiura K."/>
            <person name="Sultana R."/>
            <person name="Takenaka Y."/>
            <person name="Taki K."/>
            <person name="Tammoja K."/>
            <person name="Tan S.L."/>
            <person name="Tang S."/>
            <person name="Taylor M.S."/>
            <person name="Tegner J."/>
            <person name="Teichmann S.A."/>
            <person name="Ueda H.R."/>
            <person name="van Nimwegen E."/>
            <person name="Verardo R."/>
            <person name="Wei C.L."/>
            <person name="Yagi K."/>
            <person name="Yamanishi H."/>
            <person name="Zabarovsky E."/>
            <person name="Zhu S."/>
            <person name="Zimmer A."/>
            <person name="Hide W."/>
            <person name="Bult C."/>
            <person name="Grimmond S.M."/>
            <person name="Teasdale R.D."/>
            <person name="Liu E.T."/>
            <person name="Brusic V."/>
            <person name="Quackenbush J."/>
            <person name="Wahlestedt C."/>
            <person name="Mattick J.S."/>
            <person name="Hume D.A."/>
            <person name="Kai C."/>
            <person name="Sasaki D."/>
            <person name="Tomaru Y."/>
            <person name="Fukuda S."/>
            <person name="Kanamori-Katayama M."/>
            <person name="Suzuki M."/>
            <person name="Aoki J."/>
            <person name="Arakawa T."/>
            <person name="Iida J."/>
            <person name="Imamura K."/>
            <person name="Itoh M."/>
            <person name="Kato T."/>
            <person name="Kawaji H."/>
            <person name="Kawagashira N."/>
            <person name="Kawashima T."/>
            <person name="Kojima M."/>
            <person name="Kondo S."/>
            <person name="Konno H."/>
            <person name="Nakano K."/>
            <person name="Ninomiya N."/>
            <person name="Nishio T."/>
            <person name="Okada M."/>
            <person name="Plessy C."/>
            <person name="Shibata K."/>
            <person name="Shiraki T."/>
            <person name="Suzuki S."/>
            <person name="Tagami M."/>
            <person name="Waki K."/>
            <person name="Watahiki A."/>
            <person name="Okamura-Oho Y."/>
            <person name="Suzuki H."/>
            <person name="Kawai J."/>
            <person name="Hayashizaki Y."/>
        </authorList>
    </citation>
    <scope>NUCLEOTIDE SEQUENCE [LARGE SCALE MRNA]</scope>
    <source>
        <strain>C57BL/6J</strain>
        <strain>NOD</strain>
        <tissue>Diencephalon</tissue>
        <tissue>Spinal ganglion</tissue>
        <tissue>Spleen</tissue>
    </source>
</reference>
<reference key="3">
    <citation type="journal article" date="2009" name="PLoS Biol.">
        <title>Lineage-specific biology revealed by a finished genome assembly of the mouse.</title>
        <authorList>
            <person name="Church D.M."/>
            <person name="Goodstadt L."/>
            <person name="Hillier L.W."/>
            <person name="Zody M.C."/>
            <person name="Goldstein S."/>
            <person name="She X."/>
            <person name="Bult C.J."/>
            <person name="Agarwala R."/>
            <person name="Cherry J.L."/>
            <person name="DiCuccio M."/>
            <person name="Hlavina W."/>
            <person name="Kapustin Y."/>
            <person name="Meric P."/>
            <person name="Maglott D."/>
            <person name="Birtle Z."/>
            <person name="Marques A.C."/>
            <person name="Graves T."/>
            <person name="Zhou S."/>
            <person name="Teague B."/>
            <person name="Potamousis K."/>
            <person name="Churas C."/>
            <person name="Place M."/>
            <person name="Herschleb J."/>
            <person name="Runnheim R."/>
            <person name="Forrest D."/>
            <person name="Amos-Landgraf J."/>
            <person name="Schwartz D.C."/>
            <person name="Cheng Z."/>
            <person name="Lindblad-Toh K."/>
            <person name="Eichler E.E."/>
            <person name="Ponting C.P."/>
        </authorList>
    </citation>
    <scope>NUCLEOTIDE SEQUENCE [LARGE SCALE GENOMIC DNA]</scope>
    <source>
        <strain>C57BL/6J</strain>
    </source>
</reference>
<reference key="4">
    <citation type="submission" date="2005-07" db="EMBL/GenBank/DDBJ databases">
        <authorList>
            <person name="Mural R.J."/>
            <person name="Adams M.D."/>
            <person name="Myers E.W."/>
            <person name="Smith H.O."/>
            <person name="Venter J.C."/>
        </authorList>
    </citation>
    <scope>NUCLEOTIDE SEQUENCE [LARGE SCALE GENOMIC DNA]</scope>
</reference>
<reference key="5">
    <citation type="journal article" date="2016" name="J. Cell Sci.">
        <title>WDR8 is a centriolar satellite and centriole-associated protein that promotes ciliary vesicle docking during ciliogenesis.</title>
        <authorList>
            <person name="Kurtulmus B."/>
            <person name="Wang W."/>
            <person name="Ruppert T."/>
            <person name="Neuner A."/>
            <person name="Cerikan B."/>
            <person name="Viol L."/>
            <person name="Duenas-Sanchez R."/>
            <person name="Gruss O.J."/>
            <person name="Pereira G."/>
        </authorList>
    </citation>
    <scope>FUNCTION</scope>
    <scope>SUBCELLULAR LOCATION</scope>
    <scope>INTERACTION WITH SSX2IP</scope>
</reference>
<evidence type="ECO:0000250" key="1">
    <source>
        <dbReference type="UniProtKB" id="Q9P2S5"/>
    </source>
</evidence>
<evidence type="ECO:0000269" key="2">
    <source>
    </source>
</evidence>
<evidence type="ECO:0000305" key="3"/>
<protein>
    <recommendedName>
        <fullName>WD repeat-containing protein WRAP73</fullName>
    </recommendedName>
    <alternativeName>
        <fullName>WD repeat-containing protein 8</fullName>
    </alternativeName>
    <alternativeName>
        <fullName>WD repeat-containing protein antisense to TP73 gene</fullName>
    </alternativeName>
</protein>
<sequence>MNFSESFKLSGLLCRFSPDGKYLASCVQYRLVIRDVTTLQILQLYTCLDQIQHIEWSADSLFILCAMYRRGLVQVWSLEQPEWHCKIDEGSAGLVASCWSPDGRHILNTTEFHLRITVWSLCTKSVSYIKYPKACQQGLTFTRDGRYLALAERRDCRDYVSIFVCSDWQLLRHFDTDTQDLTGIEWAPNGCVLAAWDTCLEYKVLLYSLDGRLLSAYCAYEWSLGIKSVAWSPSSQFLAIGSYDGKVRLLNHVTWKMITEFGHPATINNPKTVVYKEAEKSPLLGLGHLSFPPPRAMAGALSTSESKYEIASGPVSLQTLKPVADRANPRMGVGMLAFSSDSYFLASRNDNVPNAVWIWDIQKLKLFVVLEHMSPVRSFQWDPQQPRLAICTGGSKVYLWSPAGCVSVQVPGEGDFPVLGLCWHLSGDSLALLSKDHFCLCFLETKERVGTAYEQRDGMPRT</sequence>
<keyword id="KW-0970">Cilium biogenesis/degradation</keyword>
<keyword id="KW-0963">Cytoplasm</keyword>
<keyword id="KW-0206">Cytoskeleton</keyword>
<keyword id="KW-0597">Phosphoprotein</keyword>
<keyword id="KW-1185">Reference proteome</keyword>
<keyword id="KW-0677">Repeat</keyword>
<keyword id="KW-0853">WD repeat</keyword>
<organism>
    <name type="scientific">Mus musculus</name>
    <name type="common">Mouse</name>
    <dbReference type="NCBI Taxonomy" id="10090"/>
    <lineage>
        <taxon>Eukaryota</taxon>
        <taxon>Metazoa</taxon>
        <taxon>Chordata</taxon>
        <taxon>Craniata</taxon>
        <taxon>Vertebrata</taxon>
        <taxon>Euteleostomi</taxon>
        <taxon>Mammalia</taxon>
        <taxon>Eutheria</taxon>
        <taxon>Euarchontoglires</taxon>
        <taxon>Glires</taxon>
        <taxon>Rodentia</taxon>
        <taxon>Myomorpha</taxon>
        <taxon>Muroidea</taxon>
        <taxon>Muridae</taxon>
        <taxon>Murinae</taxon>
        <taxon>Mus</taxon>
        <taxon>Mus</taxon>
    </lineage>
</organism>
<comment type="function">
    <text evidence="1">The SSX2IP:WRAP73 complex is proposed to act as regulator of spindle anchoring at the mitotic centrosome. Required for the centrosomal localization of SSX2IP and normal mitotic bipolar spindle morphology. Required for the targeting of centriole satellite proteins to centrosomes such as of PCM1, SSX2IP, CEP290 and PIBF1/CEP90. Required for ciliogenesis and involved in the removal of the CEP97:CCP110 complex from the mother centriole. Involved in ciliary vesicle formation at the mother centriole and required for the docking of vesicles to the basal body during ciliogenesis; may promote docking of RAB8A- and ARL13B-containing vesicles (By similarity).</text>
</comment>
<comment type="subunit">
    <text evidence="2">Interacts with SSX2IP (PubMed:26675238).</text>
</comment>
<comment type="interaction">
    <interactant intactId="EBI-11694665">
        <id>Q9JM98</id>
    </interactant>
    <interactant intactId="EBI-2212028">
        <id>Q9Y2D8</id>
        <label>SSX2IP</label>
    </interactant>
    <organismsDiffer>true</organismsDiffer>
    <experiments>3</experiments>
</comment>
<comment type="subcellular location">
    <subcellularLocation>
        <location evidence="3">Cytoplasm</location>
    </subcellularLocation>
    <subcellularLocation>
        <location evidence="1">Cytoplasm</location>
        <location evidence="1">Cytoskeleton</location>
        <location evidence="1">Microtubule organizing center</location>
        <location evidence="1">Centrosome</location>
    </subcellularLocation>
    <text evidence="1">Enriched in the proximal end of the mother centriole. During ciliogenesis also associated with the basal body of the adjacent centriole (By similarity).</text>
</comment>
<comment type="tissue specificity">
    <text>Ubiquitous.</text>
</comment>
<gene>
    <name type="primary">Wrap73</name>
    <name type="synonym">Dd57</name>
    <name type="synonym">Wdr8</name>
</gene>
<proteinExistence type="evidence at protein level"/>